<keyword id="KW-0067">ATP-binding</keyword>
<keyword id="KW-0436">Ligase</keyword>
<keyword id="KW-0479">Metal-binding</keyword>
<keyword id="KW-0547">Nucleotide-binding</keyword>
<keyword id="KW-0671">Queuosine biosynthesis</keyword>
<keyword id="KW-0862">Zinc</keyword>
<comment type="function">
    <text evidence="1">Catalyzes the ATP-dependent conversion of 7-carboxy-7-deazaguanine (CDG) to 7-cyano-7-deazaguanine (preQ(0)).</text>
</comment>
<comment type="catalytic activity">
    <reaction evidence="1">
        <text>7-carboxy-7-deazaguanine + NH4(+) + ATP = 7-cyano-7-deazaguanine + ADP + phosphate + H2O + H(+)</text>
        <dbReference type="Rhea" id="RHEA:27982"/>
        <dbReference type="ChEBI" id="CHEBI:15377"/>
        <dbReference type="ChEBI" id="CHEBI:15378"/>
        <dbReference type="ChEBI" id="CHEBI:28938"/>
        <dbReference type="ChEBI" id="CHEBI:30616"/>
        <dbReference type="ChEBI" id="CHEBI:43474"/>
        <dbReference type="ChEBI" id="CHEBI:45075"/>
        <dbReference type="ChEBI" id="CHEBI:61036"/>
        <dbReference type="ChEBI" id="CHEBI:456216"/>
        <dbReference type="EC" id="6.3.4.20"/>
    </reaction>
</comment>
<comment type="cofactor">
    <cofactor evidence="1">
        <name>Zn(2+)</name>
        <dbReference type="ChEBI" id="CHEBI:29105"/>
    </cofactor>
    <text evidence="1">Binds 1 zinc ion per subunit.</text>
</comment>
<comment type="pathway">
    <text evidence="1">Purine metabolism; 7-cyano-7-deazaguanine biosynthesis.</text>
</comment>
<comment type="similarity">
    <text evidence="1">Belongs to the QueC family.</text>
</comment>
<proteinExistence type="inferred from homology"/>
<gene>
    <name evidence="1" type="primary">queC</name>
    <name type="ordered locus">Ccon26_05170</name>
    <name type="ORF">CCC13826_1538</name>
</gene>
<sequence>MKKAVCIMSGGMDSTLCAVMAKRAGYDVVALHFDYNQRTMKREKRAFDEICERLGVVKKINLDVSFIAQIGGNALTDTSMQIRKDGVSNDVPNTYVPFRNGVFISIAAALAEKEGAQAIYIGVVEEDSSGYPDCKESFIKSINEAINLGTSADFSCEIITPLVNLSKADIVSKSLELNSPIELTWSCYESEDEACGLCDSCRLRLNGFKKANAVDKIPYKK</sequence>
<name>QUEC_CAMC1</name>
<feature type="chain" id="PRO_0000336899" description="7-cyano-7-deazaguanine synthase">
    <location>
        <begin position="1"/>
        <end position="221"/>
    </location>
</feature>
<feature type="binding site" evidence="1">
    <location>
        <begin position="8"/>
        <end position="18"/>
    </location>
    <ligand>
        <name>ATP</name>
        <dbReference type="ChEBI" id="CHEBI:30616"/>
    </ligand>
</feature>
<feature type="binding site" evidence="1">
    <location>
        <position position="187"/>
    </location>
    <ligand>
        <name>Zn(2+)</name>
        <dbReference type="ChEBI" id="CHEBI:29105"/>
    </ligand>
</feature>
<feature type="binding site" evidence="1">
    <location>
        <position position="195"/>
    </location>
    <ligand>
        <name>Zn(2+)</name>
        <dbReference type="ChEBI" id="CHEBI:29105"/>
    </ligand>
</feature>
<feature type="binding site" evidence="1">
    <location>
        <position position="198"/>
    </location>
    <ligand>
        <name>Zn(2+)</name>
        <dbReference type="ChEBI" id="CHEBI:29105"/>
    </ligand>
</feature>
<feature type="binding site" evidence="1">
    <location>
        <position position="201"/>
    </location>
    <ligand>
        <name>Zn(2+)</name>
        <dbReference type="ChEBI" id="CHEBI:29105"/>
    </ligand>
</feature>
<organism>
    <name type="scientific">Campylobacter concisus (strain 13826)</name>
    <dbReference type="NCBI Taxonomy" id="360104"/>
    <lineage>
        <taxon>Bacteria</taxon>
        <taxon>Pseudomonadati</taxon>
        <taxon>Campylobacterota</taxon>
        <taxon>Epsilonproteobacteria</taxon>
        <taxon>Campylobacterales</taxon>
        <taxon>Campylobacteraceae</taxon>
        <taxon>Campylobacter</taxon>
    </lineage>
</organism>
<protein>
    <recommendedName>
        <fullName evidence="1">7-cyano-7-deazaguanine synthase</fullName>
        <ecNumber evidence="1">6.3.4.20</ecNumber>
    </recommendedName>
    <alternativeName>
        <fullName evidence="1">7-cyano-7-carbaguanine synthase</fullName>
    </alternativeName>
    <alternativeName>
        <fullName evidence="1">PreQ(0) synthase</fullName>
    </alternativeName>
    <alternativeName>
        <fullName evidence="1">Queuosine biosynthesis protein QueC</fullName>
    </alternativeName>
</protein>
<dbReference type="EC" id="6.3.4.20" evidence="1"/>
<dbReference type="EMBL" id="CP000792">
    <property type="protein sequence ID" value="EAT99024.2"/>
    <property type="molecule type" value="Genomic_DNA"/>
</dbReference>
<dbReference type="RefSeq" id="WP_012001392.1">
    <property type="nucleotide sequence ID" value="NC_009802.2"/>
</dbReference>
<dbReference type="SMR" id="A7ZCA8"/>
<dbReference type="STRING" id="360104.CCC13826_1538"/>
<dbReference type="KEGG" id="cco:CCC13826_1538"/>
<dbReference type="eggNOG" id="COG0603">
    <property type="taxonomic scope" value="Bacteria"/>
</dbReference>
<dbReference type="HOGENOM" id="CLU_081854_1_0_7"/>
<dbReference type="OrthoDB" id="9789567at2"/>
<dbReference type="UniPathway" id="UPA00391"/>
<dbReference type="Proteomes" id="UP000001121">
    <property type="component" value="Chromosome"/>
</dbReference>
<dbReference type="GO" id="GO:0005524">
    <property type="term" value="F:ATP binding"/>
    <property type="evidence" value="ECO:0007669"/>
    <property type="project" value="UniProtKB-UniRule"/>
</dbReference>
<dbReference type="GO" id="GO:0016879">
    <property type="term" value="F:ligase activity, forming carbon-nitrogen bonds"/>
    <property type="evidence" value="ECO:0007669"/>
    <property type="project" value="UniProtKB-UniRule"/>
</dbReference>
<dbReference type="GO" id="GO:0008270">
    <property type="term" value="F:zinc ion binding"/>
    <property type="evidence" value="ECO:0007669"/>
    <property type="project" value="UniProtKB-UniRule"/>
</dbReference>
<dbReference type="GO" id="GO:0008616">
    <property type="term" value="P:queuosine biosynthetic process"/>
    <property type="evidence" value="ECO:0007669"/>
    <property type="project" value="UniProtKB-UniRule"/>
</dbReference>
<dbReference type="CDD" id="cd01995">
    <property type="entry name" value="QueC-like"/>
    <property type="match status" value="1"/>
</dbReference>
<dbReference type="Gene3D" id="3.40.50.620">
    <property type="entry name" value="HUPs"/>
    <property type="match status" value="1"/>
</dbReference>
<dbReference type="HAMAP" id="MF_01633">
    <property type="entry name" value="QueC"/>
    <property type="match status" value="1"/>
</dbReference>
<dbReference type="InterPro" id="IPR018317">
    <property type="entry name" value="QueC"/>
</dbReference>
<dbReference type="InterPro" id="IPR014729">
    <property type="entry name" value="Rossmann-like_a/b/a_fold"/>
</dbReference>
<dbReference type="NCBIfam" id="TIGR00364">
    <property type="entry name" value="7-cyano-7-deazaguanine synthase QueC"/>
    <property type="match status" value="1"/>
</dbReference>
<dbReference type="PANTHER" id="PTHR42914">
    <property type="entry name" value="7-CYANO-7-DEAZAGUANINE SYNTHASE"/>
    <property type="match status" value="1"/>
</dbReference>
<dbReference type="PANTHER" id="PTHR42914:SF1">
    <property type="entry name" value="7-CYANO-7-DEAZAGUANINE SYNTHASE"/>
    <property type="match status" value="1"/>
</dbReference>
<dbReference type="Pfam" id="PF06508">
    <property type="entry name" value="QueC"/>
    <property type="match status" value="1"/>
</dbReference>
<dbReference type="PIRSF" id="PIRSF006293">
    <property type="entry name" value="ExsB"/>
    <property type="match status" value="1"/>
</dbReference>
<dbReference type="SUPFAM" id="SSF52402">
    <property type="entry name" value="Adenine nucleotide alpha hydrolases-like"/>
    <property type="match status" value="1"/>
</dbReference>
<accession>A7ZCA8</accession>
<reference key="1">
    <citation type="submission" date="2007-10" db="EMBL/GenBank/DDBJ databases">
        <title>Genome sequence of Campylobacter concisus 13826 isolated from human feces.</title>
        <authorList>
            <person name="Fouts D.E."/>
            <person name="Mongodin E.F."/>
            <person name="Puiu D."/>
            <person name="Sebastian Y."/>
            <person name="Miller W.G."/>
            <person name="Mandrell R.E."/>
            <person name="On S."/>
            <person name="Nelson K.E."/>
        </authorList>
    </citation>
    <scope>NUCLEOTIDE SEQUENCE [LARGE SCALE GENOMIC DNA]</scope>
    <source>
        <strain>13826</strain>
    </source>
</reference>
<evidence type="ECO:0000255" key="1">
    <source>
        <dbReference type="HAMAP-Rule" id="MF_01633"/>
    </source>
</evidence>